<sequence>MHSSALLCCLVLLTGVRASPGQGTQSENSCTRFPGNLPHMLRDLRDAFSRVKTFFQMKDQLDNILLKESLLEDFKGYLGCQALSEMIQFYLEEVMPQAENHDPDIKEHVNSLGENLKTLRLRLRRCHRFLPCENKSKAVEQVMNAFSKLQEKGVYKAMSEFDIFINYIEAYMTMKIQN</sequence>
<accession>P51497</accession>
<evidence type="ECO:0000250" key="1"/>
<evidence type="ECO:0000250" key="2">
    <source>
        <dbReference type="UniProtKB" id="P18893"/>
    </source>
</evidence>
<evidence type="ECO:0000250" key="3">
    <source>
        <dbReference type="UniProtKB" id="P22301"/>
    </source>
</evidence>
<evidence type="ECO:0000255" key="4"/>
<evidence type="ECO:0000305" key="5"/>
<dbReference type="EMBL" id="L26031">
    <property type="protein sequence ID" value="AAA99976.1"/>
    <property type="molecule type" value="mRNA"/>
</dbReference>
<dbReference type="RefSeq" id="NP_001292825.1">
    <property type="nucleotide sequence ID" value="NM_001305896.1"/>
</dbReference>
<dbReference type="SMR" id="P51497"/>
<dbReference type="STRING" id="9545.ENSMNEP00000036763"/>
<dbReference type="GlyCosmos" id="P51497">
    <property type="glycosylation" value="1 site, No reported glycans"/>
</dbReference>
<dbReference type="GeneID" id="105484849"/>
<dbReference type="KEGG" id="mni:105484849"/>
<dbReference type="CTD" id="3586"/>
<dbReference type="OrthoDB" id="7809at314294"/>
<dbReference type="Proteomes" id="UP000233120">
    <property type="component" value="Unassembled WGS sequence"/>
</dbReference>
<dbReference type="GO" id="GO:0005615">
    <property type="term" value="C:extracellular space"/>
    <property type="evidence" value="ECO:0000250"/>
    <property type="project" value="UniProtKB"/>
</dbReference>
<dbReference type="GO" id="GO:0005125">
    <property type="term" value="F:cytokine activity"/>
    <property type="evidence" value="ECO:0007669"/>
    <property type="project" value="UniProtKB-KW"/>
</dbReference>
<dbReference type="GO" id="GO:0006955">
    <property type="term" value="P:immune response"/>
    <property type="evidence" value="ECO:0007669"/>
    <property type="project" value="InterPro"/>
</dbReference>
<dbReference type="GO" id="GO:0030889">
    <property type="term" value="P:negative regulation of B cell proliferation"/>
    <property type="evidence" value="ECO:0000250"/>
    <property type="project" value="UniProtKB"/>
</dbReference>
<dbReference type="GO" id="GO:0002719">
    <property type="term" value="P:negative regulation of cytokine production involved in immune response"/>
    <property type="evidence" value="ECO:0000250"/>
    <property type="project" value="UniProtKB"/>
</dbReference>
<dbReference type="GO" id="GO:0050728">
    <property type="term" value="P:negative regulation of inflammatory response"/>
    <property type="evidence" value="ECO:0000250"/>
    <property type="project" value="UniProtKB"/>
</dbReference>
<dbReference type="GO" id="GO:0032715">
    <property type="term" value="P:negative regulation of interleukin-6 production"/>
    <property type="evidence" value="ECO:0000250"/>
    <property type="project" value="UniProtKB"/>
</dbReference>
<dbReference type="GO" id="GO:0051045">
    <property type="term" value="P:negative regulation of membrane protein ectodomain proteolysis"/>
    <property type="evidence" value="ECO:0000250"/>
    <property type="project" value="UniProtKB"/>
</dbReference>
<dbReference type="GO" id="GO:0002904">
    <property type="term" value="P:positive regulation of B cell apoptotic process"/>
    <property type="evidence" value="ECO:0000250"/>
    <property type="project" value="UniProtKB"/>
</dbReference>
<dbReference type="GO" id="GO:0001819">
    <property type="term" value="P:positive regulation of cytokine production"/>
    <property type="evidence" value="ECO:0000250"/>
    <property type="project" value="UniProtKB"/>
</dbReference>
<dbReference type="GO" id="GO:0051091">
    <property type="term" value="P:positive regulation of DNA-binding transcription factor activity"/>
    <property type="evidence" value="ECO:0000250"/>
    <property type="project" value="UniProtKB"/>
</dbReference>
<dbReference type="GO" id="GO:0045893">
    <property type="term" value="P:positive regulation of DNA-templated transcription"/>
    <property type="evidence" value="ECO:0000250"/>
    <property type="project" value="UniProtKB"/>
</dbReference>
<dbReference type="GO" id="GO:0051384">
    <property type="term" value="P:response to glucocorticoid"/>
    <property type="evidence" value="ECO:0000250"/>
    <property type="project" value="UniProtKB"/>
</dbReference>
<dbReference type="GO" id="GO:0002237">
    <property type="term" value="P:response to molecule of bacterial origin"/>
    <property type="evidence" value="ECO:0000250"/>
    <property type="project" value="UniProtKB"/>
</dbReference>
<dbReference type="FunFam" id="1.20.1250.10:FF:000011">
    <property type="entry name" value="Interleukin-10"/>
    <property type="match status" value="1"/>
</dbReference>
<dbReference type="Gene3D" id="1.20.1250.10">
    <property type="match status" value="1"/>
</dbReference>
<dbReference type="InterPro" id="IPR009079">
    <property type="entry name" value="4_helix_cytokine-like_core"/>
</dbReference>
<dbReference type="InterPro" id="IPR000098">
    <property type="entry name" value="IL-10"/>
</dbReference>
<dbReference type="InterPro" id="IPR020443">
    <property type="entry name" value="IL-10/19/20/24/26"/>
</dbReference>
<dbReference type="InterPro" id="IPR020423">
    <property type="entry name" value="IL-10_CS"/>
</dbReference>
<dbReference type="PANTHER" id="PTHR48482:SF5">
    <property type="entry name" value="INTERLEUKIN-10"/>
    <property type="match status" value="1"/>
</dbReference>
<dbReference type="PANTHER" id="PTHR48482">
    <property type="entry name" value="INTERLEUKIN-19-RELATED"/>
    <property type="match status" value="1"/>
</dbReference>
<dbReference type="Pfam" id="PF00726">
    <property type="entry name" value="IL10"/>
    <property type="match status" value="1"/>
</dbReference>
<dbReference type="PRINTS" id="PR01294">
    <property type="entry name" value="INTRLEUKIN10"/>
</dbReference>
<dbReference type="SMART" id="SM00188">
    <property type="entry name" value="IL10"/>
    <property type="match status" value="1"/>
</dbReference>
<dbReference type="SUPFAM" id="SSF47266">
    <property type="entry name" value="4-helical cytokines"/>
    <property type="match status" value="1"/>
</dbReference>
<dbReference type="PROSITE" id="PS00520">
    <property type="entry name" value="INTERLEUKIN_10"/>
    <property type="match status" value="1"/>
</dbReference>
<keyword id="KW-0202">Cytokine</keyword>
<keyword id="KW-1015">Disulfide bond</keyword>
<keyword id="KW-0325">Glycoprotein</keyword>
<keyword id="KW-1185">Reference proteome</keyword>
<keyword id="KW-0964">Secreted</keyword>
<keyword id="KW-0732">Signal</keyword>
<comment type="function">
    <text evidence="2 3">Major immune regulatory cytokine that acts on many cells of the immune system where it has profound anti-inflammatory functions, limiting excessive tissue disruption caused by inflammation. Mechanistically, IL10 binds to its heterotetrameric receptor comprising IL10RA and IL10RB leading to JAK1 and STAT2-mediated phosphorylation of STAT3. In turn, STAT3 translocates to the nucleus where it drives expression of anti-inflammatory mediators. Targets antigen-presenting cells (APCs) such as macrophages and monocytes and inhibits their release of pro-inflammatory cytokines including granulocyte-macrophage colony-stimulating factor /GM-CSF, granulocyte colony-stimulating factor/G-CSF, IL-1 alpha, IL-1 beta, IL-6, IL-8 and TNF-alpha. Also interferes with antigen presentation by reducing the expression of MHC-class II and co-stimulatory molecules, thereby inhibiting their ability to induce T cell activation (By similarity). In addition, controls the inflammatory response of macrophages by reprogramming essential metabolic pathways including mTOR signaling (By similarity).</text>
</comment>
<comment type="subunit">
    <text evidence="3">Homodimer. Interacts with IL10RA and IL10RB.</text>
</comment>
<comment type="subcellular location">
    <subcellularLocation>
        <location evidence="3">Secreted</location>
    </subcellularLocation>
</comment>
<comment type="similarity">
    <text evidence="5">Belongs to the IL-10 family.</text>
</comment>
<feature type="signal peptide" evidence="4">
    <location>
        <begin position="1"/>
        <end position="18"/>
    </location>
</feature>
<feature type="chain" id="PRO_0000015364" description="Interleukin-10">
    <location>
        <begin position="19"/>
        <end position="178"/>
    </location>
</feature>
<feature type="glycosylation site" description="N-linked (GlcNAc...) asparagine" evidence="4">
    <location>
        <position position="134"/>
    </location>
</feature>
<feature type="disulfide bond" evidence="1">
    <location>
        <begin position="30"/>
        <end position="126"/>
    </location>
</feature>
<feature type="disulfide bond" evidence="1">
    <location>
        <begin position="80"/>
        <end position="132"/>
    </location>
</feature>
<reference key="1">
    <citation type="journal article" date="1995" name="J. Immunol.">
        <title>Comparative sequence analysis of cytokine genes from human and nonhuman primates.</title>
        <authorList>
            <person name="Villinger F.J."/>
            <person name="Brar S.S."/>
            <person name="Mayne A.E."/>
            <person name="Chikkala N."/>
            <person name="Ansari A.A."/>
        </authorList>
    </citation>
    <scope>NUCLEOTIDE SEQUENCE [MRNA]</scope>
    <source>
        <strain>PT 10000</strain>
    </source>
</reference>
<gene>
    <name type="primary">IL10</name>
</gene>
<proteinExistence type="evidence at transcript level"/>
<name>IL10_MACNE</name>
<protein>
    <recommendedName>
        <fullName>Interleukin-10</fullName>
        <shortName>IL-10</shortName>
    </recommendedName>
    <alternativeName>
        <fullName>Cytokine synthesis inhibitory factor</fullName>
        <shortName>CSIF</shortName>
    </alternativeName>
</protein>
<organism>
    <name type="scientific">Macaca nemestrina</name>
    <name type="common">Pig-tailed macaque</name>
    <dbReference type="NCBI Taxonomy" id="9545"/>
    <lineage>
        <taxon>Eukaryota</taxon>
        <taxon>Metazoa</taxon>
        <taxon>Chordata</taxon>
        <taxon>Craniata</taxon>
        <taxon>Vertebrata</taxon>
        <taxon>Euteleostomi</taxon>
        <taxon>Mammalia</taxon>
        <taxon>Eutheria</taxon>
        <taxon>Euarchontoglires</taxon>
        <taxon>Primates</taxon>
        <taxon>Haplorrhini</taxon>
        <taxon>Catarrhini</taxon>
        <taxon>Cercopithecidae</taxon>
        <taxon>Cercopithecinae</taxon>
        <taxon>Macaca</taxon>
    </lineage>
</organism>